<sequence>MNKKIRVRYAPSPTGLLHIGNARTALFNYLFARHHGGDFIIRIEDTDRERHVEDGERSQLENLRWLGMDWDESPETHENYRQSERLPLYQKYIDQLLAEGKAYYSYKTPEELEADHAKQEAAGIPPHYINEYAGMSDDEKAAYIAERKAQNIEPVVRISVDEKAIYKWNDIVKGEIEFEGGNIGGDWVIQKRDGYPTYNFAVVVDDHDMQISHVIRGDDHIANTPKQLVVYNALGWEAPQFGHMTLIINSETGKKLSKRDTNTLQFIEDYRKKGYMSDAIFNFIALLGWNPGGEKEIFSCEELIELFDENRLSKSPAAFDQKKLDWMDNEYIKNADFAKVFELTKPFLVAANRFDERAKELVKLYQPQMKSADEIVELTELFYGDFPELTDEAREMLAAETTPLVLSTFRAKLAELPESDFTVENIFPLFKATQKETGVKGKMLWMPIRIAASGSMHGPELPETIALLGKEKVLAHLDAALNK</sequence>
<gene>
    <name evidence="1" type="primary">gltX</name>
    <name type="ordered locus">llmg_2332</name>
</gene>
<comment type="function">
    <text evidence="1">Catalyzes the attachment of glutamate to tRNA(Glu) in a two-step reaction: glutamate is first activated by ATP to form Glu-AMP and then transferred to the acceptor end of tRNA(Glu).</text>
</comment>
<comment type="catalytic activity">
    <reaction evidence="1">
        <text>tRNA(Glu) + L-glutamate + ATP = L-glutamyl-tRNA(Glu) + AMP + diphosphate</text>
        <dbReference type="Rhea" id="RHEA:23540"/>
        <dbReference type="Rhea" id="RHEA-COMP:9663"/>
        <dbReference type="Rhea" id="RHEA-COMP:9680"/>
        <dbReference type="ChEBI" id="CHEBI:29985"/>
        <dbReference type="ChEBI" id="CHEBI:30616"/>
        <dbReference type="ChEBI" id="CHEBI:33019"/>
        <dbReference type="ChEBI" id="CHEBI:78442"/>
        <dbReference type="ChEBI" id="CHEBI:78520"/>
        <dbReference type="ChEBI" id="CHEBI:456215"/>
        <dbReference type="EC" id="6.1.1.17"/>
    </reaction>
</comment>
<comment type="subunit">
    <text evidence="1">Monomer.</text>
</comment>
<comment type="subcellular location">
    <subcellularLocation>
        <location evidence="1">Cytoplasm</location>
    </subcellularLocation>
</comment>
<comment type="similarity">
    <text evidence="1">Belongs to the class-I aminoacyl-tRNA synthetase family. Glutamate--tRNA ligase type 1 subfamily.</text>
</comment>
<accession>A2RNK5</accession>
<evidence type="ECO:0000255" key="1">
    <source>
        <dbReference type="HAMAP-Rule" id="MF_00022"/>
    </source>
</evidence>
<organism>
    <name type="scientific">Lactococcus lactis subsp. cremoris (strain MG1363)</name>
    <dbReference type="NCBI Taxonomy" id="416870"/>
    <lineage>
        <taxon>Bacteria</taxon>
        <taxon>Bacillati</taxon>
        <taxon>Bacillota</taxon>
        <taxon>Bacilli</taxon>
        <taxon>Lactobacillales</taxon>
        <taxon>Streptococcaceae</taxon>
        <taxon>Lactococcus</taxon>
        <taxon>Lactococcus cremoris subsp. cremoris</taxon>
    </lineage>
</organism>
<dbReference type="EC" id="6.1.1.17" evidence="1"/>
<dbReference type="EMBL" id="AM406671">
    <property type="protein sequence ID" value="CAL98895.1"/>
    <property type="molecule type" value="Genomic_DNA"/>
</dbReference>
<dbReference type="RefSeq" id="WP_011836000.1">
    <property type="nucleotide sequence ID" value="NC_009004.1"/>
</dbReference>
<dbReference type="SMR" id="A2RNK5"/>
<dbReference type="STRING" id="416870.llmg_2332"/>
<dbReference type="KEGG" id="llm:llmg_2332"/>
<dbReference type="eggNOG" id="COG0008">
    <property type="taxonomic scope" value="Bacteria"/>
</dbReference>
<dbReference type="HOGENOM" id="CLU_015768_6_1_9"/>
<dbReference type="OrthoDB" id="9807503at2"/>
<dbReference type="PhylomeDB" id="A2RNK5"/>
<dbReference type="Proteomes" id="UP000000364">
    <property type="component" value="Chromosome"/>
</dbReference>
<dbReference type="GO" id="GO:0005829">
    <property type="term" value="C:cytosol"/>
    <property type="evidence" value="ECO:0007669"/>
    <property type="project" value="TreeGrafter"/>
</dbReference>
<dbReference type="GO" id="GO:0005524">
    <property type="term" value="F:ATP binding"/>
    <property type="evidence" value="ECO:0007669"/>
    <property type="project" value="UniProtKB-UniRule"/>
</dbReference>
<dbReference type="GO" id="GO:0004818">
    <property type="term" value="F:glutamate-tRNA ligase activity"/>
    <property type="evidence" value="ECO:0007669"/>
    <property type="project" value="UniProtKB-UniRule"/>
</dbReference>
<dbReference type="GO" id="GO:0000049">
    <property type="term" value="F:tRNA binding"/>
    <property type="evidence" value="ECO:0007669"/>
    <property type="project" value="InterPro"/>
</dbReference>
<dbReference type="GO" id="GO:0008270">
    <property type="term" value="F:zinc ion binding"/>
    <property type="evidence" value="ECO:0007669"/>
    <property type="project" value="InterPro"/>
</dbReference>
<dbReference type="GO" id="GO:0006424">
    <property type="term" value="P:glutamyl-tRNA aminoacylation"/>
    <property type="evidence" value="ECO:0007669"/>
    <property type="project" value="UniProtKB-UniRule"/>
</dbReference>
<dbReference type="CDD" id="cd00808">
    <property type="entry name" value="GluRS_core"/>
    <property type="match status" value="1"/>
</dbReference>
<dbReference type="FunFam" id="1.10.10.350:FF:000002">
    <property type="entry name" value="Glutamate--tRNA ligase"/>
    <property type="match status" value="1"/>
</dbReference>
<dbReference type="FunFam" id="3.40.50.620:FF:000007">
    <property type="entry name" value="Glutamate--tRNA ligase"/>
    <property type="match status" value="1"/>
</dbReference>
<dbReference type="Gene3D" id="1.10.10.350">
    <property type="match status" value="1"/>
</dbReference>
<dbReference type="Gene3D" id="3.40.50.620">
    <property type="entry name" value="HUPs"/>
    <property type="match status" value="1"/>
</dbReference>
<dbReference type="HAMAP" id="MF_00022">
    <property type="entry name" value="Glu_tRNA_synth_type1"/>
    <property type="match status" value="1"/>
</dbReference>
<dbReference type="InterPro" id="IPR045462">
    <property type="entry name" value="aa-tRNA-synth_I_cd-bd"/>
</dbReference>
<dbReference type="InterPro" id="IPR020751">
    <property type="entry name" value="aa-tRNA-synth_I_codon-bd_sub2"/>
</dbReference>
<dbReference type="InterPro" id="IPR001412">
    <property type="entry name" value="aa-tRNA-synth_I_CS"/>
</dbReference>
<dbReference type="InterPro" id="IPR008925">
    <property type="entry name" value="aa_tRNA-synth_I_cd-bd_sf"/>
</dbReference>
<dbReference type="InterPro" id="IPR004527">
    <property type="entry name" value="Glu-tRNA-ligase_bac/mito"/>
</dbReference>
<dbReference type="InterPro" id="IPR000924">
    <property type="entry name" value="Glu/Gln-tRNA-synth"/>
</dbReference>
<dbReference type="InterPro" id="IPR020058">
    <property type="entry name" value="Glu/Gln-tRNA-synth_Ib_cat-dom"/>
</dbReference>
<dbReference type="InterPro" id="IPR049940">
    <property type="entry name" value="GluQ/Sye"/>
</dbReference>
<dbReference type="InterPro" id="IPR033910">
    <property type="entry name" value="GluRS_core"/>
</dbReference>
<dbReference type="InterPro" id="IPR014729">
    <property type="entry name" value="Rossmann-like_a/b/a_fold"/>
</dbReference>
<dbReference type="NCBIfam" id="TIGR00464">
    <property type="entry name" value="gltX_bact"/>
    <property type="match status" value="1"/>
</dbReference>
<dbReference type="PANTHER" id="PTHR43311">
    <property type="entry name" value="GLUTAMATE--TRNA LIGASE"/>
    <property type="match status" value="1"/>
</dbReference>
<dbReference type="PANTHER" id="PTHR43311:SF2">
    <property type="entry name" value="GLUTAMATE--TRNA LIGASE, MITOCHONDRIAL-RELATED"/>
    <property type="match status" value="1"/>
</dbReference>
<dbReference type="Pfam" id="PF19269">
    <property type="entry name" value="Anticodon_2"/>
    <property type="match status" value="1"/>
</dbReference>
<dbReference type="Pfam" id="PF00749">
    <property type="entry name" value="tRNA-synt_1c"/>
    <property type="match status" value="1"/>
</dbReference>
<dbReference type="PRINTS" id="PR00987">
    <property type="entry name" value="TRNASYNTHGLU"/>
</dbReference>
<dbReference type="SUPFAM" id="SSF48163">
    <property type="entry name" value="An anticodon-binding domain of class I aminoacyl-tRNA synthetases"/>
    <property type="match status" value="1"/>
</dbReference>
<dbReference type="SUPFAM" id="SSF52374">
    <property type="entry name" value="Nucleotidylyl transferase"/>
    <property type="match status" value="1"/>
</dbReference>
<dbReference type="PROSITE" id="PS00178">
    <property type="entry name" value="AA_TRNA_LIGASE_I"/>
    <property type="match status" value="1"/>
</dbReference>
<protein>
    <recommendedName>
        <fullName evidence="1">Glutamate--tRNA ligase</fullName>
        <ecNumber evidence="1">6.1.1.17</ecNumber>
    </recommendedName>
    <alternativeName>
        <fullName evidence="1">Glutamyl-tRNA synthetase</fullName>
        <shortName evidence="1">GluRS</shortName>
    </alternativeName>
</protein>
<name>SYE_LACLM</name>
<proteinExistence type="inferred from homology"/>
<keyword id="KW-0030">Aminoacyl-tRNA synthetase</keyword>
<keyword id="KW-0067">ATP-binding</keyword>
<keyword id="KW-0963">Cytoplasm</keyword>
<keyword id="KW-0436">Ligase</keyword>
<keyword id="KW-0547">Nucleotide-binding</keyword>
<keyword id="KW-0648">Protein biosynthesis</keyword>
<feature type="chain" id="PRO_1000001913" description="Glutamate--tRNA ligase">
    <location>
        <begin position="1"/>
        <end position="483"/>
    </location>
</feature>
<feature type="short sequence motif" description="'HIGH' region" evidence="1">
    <location>
        <begin position="11"/>
        <end position="21"/>
    </location>
</feature>
<feature type="short sequence motif" description="'KMSKS' region" evidence="1">
    <location>
        <begin position="255"/>
        <end position="259"/>
    </location>
</feature>
<feature type="binding site" evidence="1">
    <location>
        <position position="258"/>
    </location>
    <ligand>
        <name>ATP</name>
        <dbReference type="ChEBI" id="CHEBI:30616"/>
    </ligand>
</feature>
<reference key="1">
    <citation type="journal article" date="2007" name="J. Bacteriol.">
        <title>The complete genome sequence of the lactic acid bacterial paradigm Lactococcus lactis subsp. cremoris MG1363.</title>
        <authorList>
            <person name="Wegmann U."/>
            <person name="O'Connell-Motherway M."/>
            <person name="Zomer A."/>
            <person name="Buist G."/>
            <person name="Shearman C."/>
            <person name="Canchaya C."/>
            <person name="Ventura M."/>
            <person name="Goesmann A."/>
            <person name="Gasson M.J."/>
            <person name="Kuipers O.P."/>
            <person name="van Sinderen D."/>
            <person name="Kok J."/>
        </authorList>
    </citation>
    <scope>NUCLEOTIDE SEQUENCE [LARGE SCALE GENOMIC DNA]</scope>
    <source>
        <strain>MG1363</strain>
    </source>
</reference>